<reference key="1">
    <citation type="journal article" date="1991" name="Mol. Cell. Biol.">
        <title>The fission yeast dis3+ gene encodes a 110-kDa essential protein implicated in mitotic control.</title>
        <authorList>
            <person name="Kinoshita N."/>
            <person name="Goebl M."/>
            <person name="Yanagida M."/>
        </authorList>
    </citation>
    <scope>NUCLEOTIDE SEQUENCE [GENOMIC DNA]</scope>
    <scope>FUNCTION</scope>
    <scope>SUBCELLULAR LOCATION</scope>
    <source>
        <strain>972 / ATCC 24843</strain>
    </source>
</reference>
<reference key="2">
    <citation type="journal article" date="2002" name="Nature">
        <title>The genome sequence of Schizosaccharomyces pombe.</title>
        <authorList>
            <person name="Wood V."/>
            <person name="Gwilliam R."/>
            <person name="Rajandream M.A."/>
            <person name="Lyne M.H."/>
            <person name="Lyne R."/>
            <person name="Stewart A."/>
            <person name="Sgouros J.G."/>
            <person name="Peat N."/>
            <person name="Hayles J."/>
            <person name="Baker S.G."/>
            <person name="Basham D."/>
            <person name="Bowman S."/>
            <person name="Brooks K."/>
            <person name="Brown D."/>
            <person name="Brown S."/>
            <person name="Chillingworth T."/>
            <person name="Churcher C.M."/>
            <person name="Collins M."/>
            <person name="Connor R."/>
            <person name="Cronin A."/>
            <person name="Davis P."/>
            <person name="Feltwell T."/>
            <person name="Fraser A."/>
            <person name="Gentles S."/>
            <person name="Goble A."/>
            <person name="Hamlin N."/>
            <person name="Harris D.E."/>
            <person name="Hidalgo J."/>
            <person name="Hodgson G."/>
            <person name="Holroyd S."/>
            <person name="Hornsby T."/>
            <person name="Howarth S."/>
            <person name="Huckle E.J."/>
            <person name="Hunt S."/>
            <person name="Jagels K."/>
            <person name="James K.D."/>
            <person name="Jones L."/>
            <person name="Jones M."/>
            <person name="Leather S."/>
            <person name="McDonald S."/>
            <person name="McLean J."/>
            <person name="Mooney P."/>
            <person name="Moule S."/>
            <person name="Mungall K.L."/>
            <person name="Murphy L.D."/>
            <person name="Niblett D."/>
            <person name="Odell C."/>
            <person name="Oliver K."/>
            <person name="O'Neil S."/>
            <person name="Pearson D."/>
            <person name="Quail M.A."/>
            <person name="Rabbinowitsch E."/>
            <person name="Rutherford K.M."/>
            <person name="Rutter S."/>
            <person name="Saunders D."/>
            <person name="Seeger K."/>
            <person name="Sharp S."/>
            <person name="Skelton J."/>
            <person name="Simmonds M.N."/>
            <person name="Squares R."/>
            <person name="Squares S."/>
            <person name="Stevens K."/>
            <person name="Taylor K."/>
            <person name="Taylor R.G."/>
            <person name="Tivey A."/>
            <person name="Walsh S.V."/>
            <person name="Warren T."/>
            <person name="Whitehead S."/>
            <person name="Woodward J.R."/>
            <person name="Volckaert G."/>
            <person name="Aert R."/>
            <person name="Robben J."/>
            <person name="Grymonprez B."/>
            <person name="Weltjens I."/>
            <person name="Vanstreels E."/>
            <person name="Rieger M."/>
            <person name="Schaefer M."/>
            <person name="Mueller-Auer S."/>
            <person name="Gabel C."/>
            <person name="Fuchs M."/>
            <person name="Duesterhoeft A."/>
            <person name="Fritzc C."/>
            <person name="Holzer E."/>
            <person name="Moestl D."/>
            <person name="Hilbert H."/>
            <person name="Borzym K."/>
            <person name="Langer I."/>
            <person name="Beck A."/>
            <person name="Lehrach H."/>
            <person name="Reinhardt R."/>
            <person name="Pohl T.M."/>
            <person name="Eger P."/>
            <person name="Zimmermann W."/>
            <person name="Wedler H."/>
            <person name="Wambutt R."/>
            <person name="Purnelle B."/>
            <person name="Goffeau A."/>
            <person name="Cadieu E."/>
            <person name="Dreano S."/>
            <person name="Gloux S."/>
            <person name="Lelaure V."/>
            <person name="Mottier S."/>
            <person name="Galibert F."/>
            <person name="Aves S.J."/>
            <person name="Xiang Z."/>
            <person name="Hunt C."/>
            <person name="Moore K."/>
            <person name="Hurst S.M."/>
            <person name="Lucas M."/>
            <person name="Rochet M."/>
            <person name="Gaillardin C."/>
            <person name="Tallada V.A."/>
            <person name="Garzon A."/>
            <person name="Thode G."/>
            <person name="Daga R.R."/>
            <person name="Cruzado L."/>
            <person name="Jimenez J."/>
            <person name="Sanchez M."/>
            <person name="del Rey F."/>
            <person name="Benito J."/>
            <person name="Dominguez A."/>
            <person name="Revuelta J.L."/>
            <person name="Moreno S."/>
            <person name="Armstrong J."/>
            <person name="Forsburg S.L."/>
            <person name="Cerutti L."/>
            <person name="Lowe T."/>
            <person name="McCombie W.R."/>
            <person name="Paulsen I."/>
            <person name="Potashkin J."/>
            <person name="Shpakovski G.V."/>
            <person name="Ussery D."/>
            <person name="Barrell B.G."/>
            <person name="Nurse P."/>
        </authorList>
    </citation>
    <scope>NUCLEOTIDE SEQUENCE [LARGE SCALE GENOMIC DNA]</scope>
    <source>
        <strain>972 / ATCC 24843</strain>
    </source>
</reference>
<reference key="3">
    <citation type="journal article" date="1996" name="EMBO J.">
        <title>Dis3, implicated in mitotic control, binds directly to Ran and enhances the GEF activity of RCC1.</title>
        <authorList>
            <person name="Noguchi E."/>
            <person name="Hayashi N."/>
            <person name="Azuma Y."/>
            <person name="Seki T."/>
            <person name="Nakamura M."/>
            <person name="Nakashima N."/>
            <person name="Yanagida M."/>
            <person name="He X."/>
            <person name="Mueller U."/>
            <person name="Sazer S."/>
            <person name="Nishimoto T."/>
        </authorList>
    </citation>
    <scope>INTERACTION WITH SPI1 AND PIM1</scope>
</reference>
<reference key="4">
    <citation type="journal article" date="2002" name="J. Cell Sci.">
        <title>An evolutionarily conserved fission yeast protein, Ned1, implicated in normal nuclear morphology and chromosome stability, interacts with Dis3, Pim1/RCC1 and an essential nucleoporin.</title>
        <authorList>
            <person name="Tange Y."/>
            <person name="Hirata A."/>
            <person name="Niwa O."/>
        </authorList>
    </citation>
    <scope>INTERACTION WITH NED1</scope>
</reference>
<reference key="5">
    <citation type="journal article" date="2006" name="Nat. Biotechnol.">
        <title>ORFeome cloning and global analysis of protein localization in the fission yeast Schizosaccharomyces pombe.</title>
        <authorList>
            <person name="Matsuyama A."/>
            <person name="Arai R."/>
            <person name="Yashiroda Y."/>
            <person name="Shirai A."/>
            <person name="Kamata A."/>
            <person name="Sekido S."/>
            <person name="Kobayashi Y."/>
            <person name="Hashimoto A."/>
            <person name="Hamamoto M."/>
            <person name="Hiraoka Y."/>
            <person name="Horinouchi S."/>
            <person name="Yoshida M."/>
        </authorList>
    </citation>
    <scope>SUBCELLULAR LOCATION [LARGE SCALE ANALYSIS]</scope>
</reference>
<organism>
    <name type="scientific">Schizosaccharomyces pombe (strain 972 / ATCC 24843)</name>
    <name type="common">Fission yeast</name>
    <dbReference type="NCBI Taxonomy" id="284812"/>
    <lineage>
        <taxon>Eukaryota</taxon>
        <taxon>Fungi</taxon>
        <taxon>Dikarya</taxon>
        <taxon>Ascomycota</taxon>
        <taxon>Taphrinomycotina</taxon>
        <taxon>Schizosaccharomycetes</taxon>
        <taxon>Schizosaccharomycetales</taxon>
        <taxon>Schizosaccharomycetaceae</taxon>
        <taxon>Schizosaccharomyces</taxon>
    </lineage>
</organism>
<proteinExistence type="evidence at protein level"/>
<gene>
    <name type="primary">dis3</name>
    <name type="synonym">rrp44</name>
    <name type="ORF">SPBC26H8.10</name>
</gene>
<keyword id="KW-0963">Cytoplasm</keyword>
<keyword id="KW-0255">Endonuclease</keyword>
<keyword id="KW-0269">Exonuclease</keyword>
<keyword id="KW-0271">Exosome</keyword>
<keyword id="KW-0378">Hydrolase</keyword>
<keyword id="KW-0540">Nuclease</keyword>
<keyword id="KW-0539">Nucleus</keyword>
<keyword id="KW-1185">Reference proteome</keyword>
<keyword id="KW-0694">RNA-binding</keyword>
<keyword id="KW-0698">rRNA processing</keyword>
<name>DIS3_SCHPO</name>
<evidence type="ECO:0000250" key="1"/>
<evidence type="ECO:0000250" key="2">
    <source>
        <dbReference type="UniProtKB" id="Q08162"/>
    </source>
</evidence>
<evidence type="ECO:0000255" key="3"/>
<evidence type="ECO:0000255" key="4">
    <source>
        <dbReference type="PROSITE-ProRule" id="PRU00180"/>
    </source>
</evidence>
<evidence type="ECO:0000269" key="5">
    <source>
    </source>
</evidence>
<evidence type="ECO:0000269" key="6">
    <source>
    </source>
</evidence>
<evidence type="ECO:0000269" key="7">
    <source>
    </source>
</evidence>
<evidence type="ECO:0000269" key="8">
    <source>
    </source>
</evidence>
<evidence type="ECO:0000305" key="9"/>
<sequence length="970" mass="110138">MSTVSGLKRPQSSEKNHRDRVFVRATRGKVQKVVREQYLRNDIPCQSRACPLCRSKLPKDSRGNVLEPILSEKPMFLEKFGHHYLIPDSNIFYHCIDALEHPNNFFDVIILQTVFSEISSKSIPLYNRMKRLCQEKTKRFTPFSNEFFVDTFVERLDDESANDRNDRAIRNAASWFASHLASLGIKIVLLTDDRENARLAAEQGIQVSTLKDYVQYLPDSEILLDMVSAIADAIASKEQVESGTKNVYELHWSMSRLLACIKNGEVHKGLINISTYNYLEGSVVVPGYNKPVLVSGRENLNRAVQGDIVCIQILPQDQWKTEAEEIADDDEDVVVSTAAEPDSARINDLELITKRNAHPTAKVVGILKRNWRPYVGHVDNATIAQSKGGSQQTVLLTPMDRRVPKIRFRTRQAPRLVGRRIVVAIDLWDASSRYPEGHFVRDLGEMETKEAETEALLLEYDVQHRPFPKAVLDCLPEEGHNWKVPADKTHPLWKNRKDFRDKLICSIDPPGCQDIDDALHACVLPNGNYEVGVHIADVTHFVKPNTSMDSEAASRGTTVYLVDKRIDMLPMLLGTDLCSLRPYVERFAFSCIWEMDENANIIKVHFTKSVIASKEAFSYADAQARIDDQKMQDPLTQGMRVLLKLSKILKQKRMDEGALNLASPEVRIQTDNETSDPMDVEIKQLLETNSLVEEFMLLANISVAQKIYDAFPQTAVLRRHAAPPLTNFDSLQDILRVCKGMHLKCDTSKSLAKSLDECVDPKEPYFNTLLRILTTRCMLSAEYFCSGTFAPPDFRHYGLASPIYTHFTSPIRRYADVLAHRQLAAAIDYETINPSLSDKSRLIEICNGINYRHRMAQMAGRASIEYYVGQALKGGVAEEDAYVIKVFKNGFVVFIARFGLEGIVYTKSLSSVLEPNVEYVEDEYKLNIEIRDQPKPQTVQIQMFQQVRVRVTTVRDEHSGKQKVQITLVY</sequence>
<dbReference type="EC" id="3.1.13.-"/>
<dbReference type="EC" id="3.1.26.-"/>
<dbReference type="EMBL" id="M74094">
    <property type="protein sequence ID" value="AAA35302.1"/>
    <property type="molecule type" value="Genomic_DNA"/>
</dbReference>
<dbReference type="EMBL" id="CU329671">
    <property type="protein sequence ID" value="CAA21102.1"/>
    <property type="molecule type" value="Genomic_DNA"/>
</dbReference>
<dbReference type="PIR" id="A41944">
    <property type="entry name" value="A41944"/>
</dbReference>
<dbReference type="RefSeq" id="NP_596653.1">
    <property type="nucleotide sequence ID" value="NM_001022575.2"/>
</dbReference>
<dbReference type="SMR" id="P37202"/>
<dbReference type="BioGRID" id="276926">
    <property type="interactions" value="380"/>
</dbReference>
<dbReference type="ComplexPortal" id="CPX-8914">
    <property type="entry name" value="Nucleolar exosome complex"/>
</dbReference>
<dbReference type="FunCoup" id="P37202">
    <property type="interactions" value="934"/>
</dbReference>
<dbReference type="IntAct" id="P37202">
    <property type="interactions" value="3"/>
</dbReference>
<dbReference type="MINT" id="P37202"/>
<dbReference type="STRING" id="284812.P37202"/>
<dbReference type="PaxDb" id="4896-SPBC26H8.10.1"/>
<dbReference type="EnsemblFungi" id="SPBC26H8.10.1">
    <property type="protein sequence ID" value="SPBC26H8.10.1:pep"/>
    <property type="gene ID" value="SPBC26H8.10"/>
</dbReference>
<dbReference type="GeneID" id="2540398"/>
<dbReference type="KEGG" id="spo:2540398"/>
<dbReference type="PomBase" id="SPBC26H8.10">
    <property type="gene designation" value="dis3"/>
</dbReference>
<dbReference type="VEuPathDB" id="FungiDB:SPBC26H8.10"/>
<dbReference type="eggNOG" id="KOG2102">
    <property type="taxonomic scope" value="Eukaryota"/>
</dbReference>
<dbReference type="HOGENOM" id="CLU_002333_5_0_1"/>
<dbReference type="InParanoid" id="P37202"/>
<dbReference type="OMA" id="GQVMRNN"/>
<dbReference type="PhylomeDB" id="P37202"/>
<dbReference type="BRENDA" id="3.1.13.1">
    <property type="organism ID" value="5613"/>
</dbReference>
<dbReference type="Reactome" id="R-SPO-429958">
    <property type="pathway name" value="mRNA decay by 3' to 5' exoribonuclease"/>
</dbReference>
<dbReference type="PRO" id="PR:P37202"/>
<dbReference type="Proteomes" id="UP000002485">
    <property type="component" value="Chromosome II"/>
</dbReference>
<dbReference type="GO" id="GO:0000785">
    <property type="term" value="C:chromatin"/>
    <property type="evidence" value="ECO:0000314"/>
    <property type="project" value="PomBase"/>
</dbReference>
<dbReference type="GO" id="GO:0000177">
    <property type="term" value="C:cytoplasmic exosome (RNase complex)"/>
    <property type="evidence" value="ECO:0000318"/>
    <property type="project" value="GO_Central"/>
</dbReference>
<dbReference type="GO" id="GO:0000178">
    <property type="term" value="C:exosome (RNase complex)"/>
    <property type="evidence" value="ECO:0000314"/>
    <property type="project" value="PomBase"/>
</dbReference>
<dbReference type="GO" id="GO:0000176">
    <property type="term" value="C:nuclear exosome (RNase complex)"/>
    <property type="evidence" value="ECO:0000269"/>
    <property type="project" value="PomBase"/>
</dbReference>
<dbReference type="GO" id="GO:1990251">
    <property type="term" value="C:nuclear exosome focus"/>
    <property type="evidence" value="ECO:0000314"/>
    <property type="project" value="PomBase"/>
</dbReference>
<dbReference type="GO" id="GO:0005730">
    <property type="term" value="C:nucleolus"/>
    <property type="evidence" value="ECO:0000314"/>
    <property type="project" value="PomBase"/>
</dbReference>
<dbReference type="GO" id="GO:0005654">
    <property type="term" value="C:nucleoplasm"/>
    <property type="evidence" value="ECO:0000314"/>
    <property type="project" value="PomBase"/>
</dbReference>
<dbReference type="GO" id="GO:0005634">
    <property type="term" value="C:nucleus"/>
    <property type="evidence" value="ECO:0000314"/>
    <property type="project" value="PomBase"/>
</dbReference>
<dbReference type="GO" id="GO:0000175">
    <property type="term" value="F:3'-5'-RNA exonuclease activity"/>
    <property type="evidence" value="ECO:0000315"/>
    <property type="project" value="PomBase"/>
</dbReference>
<dbReference type="GO" id="GO:0004519">
    <property type="term" value="F:endonuclease activity"/>
    <property type="evidence" value="ECO:0000318"/>
    <property type="project" value="GO_Central"/>
</dbReference>
<dbReference type="GO" id="GO:0003723">
    <property type="term" value="F:RNA binding"/>
    <property type="evidence" value="ECO:0007669"/>
    <property type="project" value="UniProtKB-KW"/>
</dbReference>
<dbReference type="GO" id="GO:0004521">
    <property type="term" value="F:RNA endonuclease activity"/>
    <property type="evidence" value="ECO:0000266"/>
    <property type="project" value="PomBase"/>
</dbReference>
<dbReference type="GO" id="GO:0004532">
    <property type="term" value="F:RNA exonuclease activity"/>
    <property type="evidence" value="ECO:0000314"/>
    <property type="project" value="PomBase"/>
</dbReference>
<dbReference type="GO" id="GO:0004540">
    <property type="term" value="F:RNA nuclease activity"/>
    <property type="evidence" value="ECO:0000315"/>
    <property type="project" value="PomBase"/>
</dbReference>
<dbReference type="GO" id="GO:0031267">
    <property type="term" value="F:small GTPase binding"/>
    <property type="evidence" value="ECO:0000353"/>
    <property type="project" value="PomBase"/>
</dbReference>
<dbReference type="GO" id="GO:0000467">
    <property type="term" value="P:exonucleolytic trimming to generate mature 3'-end of 5.8S rRNA from tricistronic rRNA transcript (SSU-rRNA, 5.8S rRNA, LSU-rRNA)"/>
    <property type="evidence" value="ECO:0000266"/>
    <property type="project" value="PomBase"/>
</dbReference>
<dbReference type="GO" id="GO:0000465">
    <property type="term" value="P:exonucleolytic trimming to generate mature 5'-end of 5.8S rRNA from tricistronic rRNA transcript (SSU-rRNA, 5.8S rRNA, LSU-rRNA)"/>
    <property type="evidence" value="ECO:0000266"/>
    <property type="project" value="PomBase"/>
</dbReference>
<dbReference type="GO" id="GO:0070651">
    <property type="term" value="P:nonfunctional rRNA decay"/>
    <property type="evidence" value="ECO:0000266"/>
    <property type="project" value="PomBase"/>
</dbReference>
<dbReference type="GO" id="GO:0033621">
    <property type="term" value="P:nuclear mRNA surveillance of meiosis-specific transcripts"/>
    <property type="evidence" value="ECO:0000315"/>
    <property type="project" value="PomBase"/>
</dbReference>
<dbReference type="GO" id="GO:0071031">
    <property type="term" value="P:nuclear mRNA surveillance of mRNA 3'-end processing"/>
    <property type="evidence" value="ECO:0000315"/>
    <property type="project" value="PomBase"/>
</dbReference>
<dbReference type="GO" id="GO:0071042">
    <property type="term" value="P:nuclear polyadenylation-dependent mRNA catabolic process"/>
    <property type="evidence" value="ECO:0000266"/>
    <property type="project" value="PomBase"/>
</dbReference>
<dbReference type="GO" id="GO:0071035">
    <property type="term" value="P:nuclear polyadenylation-dependent rRNA catabolic process"/>
    <property type="evidence" value="ECO:0000266"/>
    <property type="project" value="PomBase"/>
</dbReference>
<dbReference type="GO" id="GO:0071027">
    <property type="term" value="P:nuclear RNA surveillance"/>
    <property type="evidence" value="ECO:0000315"/>
    <property type="project" value="PomBase"/>
</dbReference>
<dbReference type="GO" id="GO:0070478">
    <property type="term" value="P:nuclear-transcribed mRNA catabolic process, 3'-5' exonucleolytic nonsense-mediated decay"/>
    <property type="evidence" value="ECO:0000266"/>
    <property type="project" value="PomBase"/>
</dbReference>
<dbReference type="GO" id="GO:0070481">
    <property type="term" value="P:nuclear-transcribed mRNA catabolic process, non-stop decay"/>
    <property type="evidence" value="ECO:0000266"/>
    <property type="project" value="PomBase"/>
</dbReference>
<dbReference type="GO" id="GO:0006401">
    <property type="term" value="P:RNA catabolic process"/>
    <property type="evidence" value="ECO:0000314"/>
    <property type="project" value="PomBase"/>
</dbReference>
<dbReference type="GO" id="GO:0016075">
    <property type="term" value="P:rRNA catabolic process"/>
    <property type="evidence" value="ECO:0000318"/>
    <property type="project" value="GO_Central"/>
</dbReference>
<dbReference type="GO" id="GO:0030847">
    <property type="term" value="P:termination of RNA polymerase II transcription, exosome-dependent"/>
    <property type="evidence" value="ECO:0000315"/>
    <property type="project" value="PomBase"/>
</dbReference>
<dbReference type="GO" id="GO:0071038">
    <property type="term" value="P:TRAMP-dependent tRNA surveillance pathway"/>
    <property type="evidence" value="ECO:0000266"/>
    <property type="project" value="PomBase"/>
</dbReference>
<dbReference type="CDD" id="cd09862">
    <property type="entry name" value="PIN_Rrp44-like"/>
    <property type="match status" value="1"/>
</dbReference>
<dbReference type="FunFam" id="3.40.50.1010:FF:000021">
    <property type="entry name" value="DIS3-like exonuclease 1 isoform X1"/>
    <property type="match status" value="1"/>
</dbReference>
<dbReference type="FunFam" id="2.40.50.690:FF:000005">
    <property type="entry name" value="Exosome complex exonuclease dis3"/>
    <property type="match status" value="1"/>
</dbReference>
<dbReference type="FunFam" id="2.40.50.700:FF:000001">
    <property type="entry name" value="Exosome complex exonuclease exoribonuclease (Rrp44)"/>
    <property type="match status" value="1"/>
</dbReference>
<dbReference type="Gene3D" id="2.40.50.690">
    <property type="match status" value="1"/>
</dbReference>
<dbReference type="Gene3D" id="2.40.50.700">
    <property type="match status" value="1"/>
</dbReference>
<dbReference type="Gene3D" id="3.40.50.1010">
    <property type="entry name" value="5'-nuclease"/>
    <property type="match status" value="1"/>
</dbReference>
<dbReference type="Gene3D" id="2.40.50.140">
    <property type="entry name" value="Nucleic acid-binding proteins"/>
    <property type="match status" value="1"/>
</dbReference>
<dbReference type="InterPro" id="IPR041505">
    <property type="entry name" value="Dis3_CSD2"/>
</dbReference>
<dbReference type="InterPro" id="IPR012340">
    <property type="entry name" value="NA-bd_OB-fold"/>
</dbReference>
<dbReference type="InterPro" id="IPR029060">
    <property type="entry name" value="PIN-like_dom_sf"/>
</dbReference>
<dbReference type="InterPro" id="IPR002716">
    <property type="entry name" value="PIN_dom"/>
</dbReference>
<dbReference type="InterPro" id="IPR001900">
    <property type="entry name" value="RNase_II/R"/>
</dbReference>
<dbReference type="InterPro" id="IPR022966">
    <property type="entry name" value="RNase_II/R_CS"/>
</dbReference>
<dbReference type="InterPro" id="IPR050180">
    <property type="entry name" value="RNR_Ribonuclease"/>
</dbReference>
<dbReference type="InterPro" id="IPR033771">
    <property type="entry name" value="Rrp44_CSD1"/>
</dbReference>
<dbReference type="InterPro" id="IPR033770">
    <property type="entry name" value="RRP44_S1"/>
</dbReference>
<dbReference type="InterPro" id="IPR003029">
    <property type="entry name" value="S1_domain"/>
</dbReference>
<dbReference type="PANTHER" id="PTHR23355:SF35">
    <property type="entry name" value="EXOSOME COMPLEX EXONUCLEASE RRP44"/>
    <property type="match status" value="1"/>
</dbReference>
<dbReference type="PANTHER" id="PTHR23355">
    <property type="entry name" value="RIBONUCLEASE"/>
    <property type="match status" value="1"/>
</dbReference>
<dbReference type="Pfam" id="PF17849">
    <property type="entry name" value="OB_Dis3"/>
    <property type="match status" value="1"/>
</dbReference>
<dbReference type="Pfam" id="PF13638">
    <property type="entry name" value="PIN_4"/>
    <property type="match status" value="1"/>
</dbReference>
<dbReference type="Pfam" id="PF00773">
    <property type="entry name" value="RNB"/>
    <property type="match status" value="1"/>
</dbReference>
<dbReference type="Pfam" id="PF17216">
    <property type="entry name" value="Rrp44_CSD1"/>
    <property type="match status" value="1"/>
</dbReference>
<dbReference type="Pfam" id="PF17215">
    <property type="entry name" value="Rrp44_S1"/>
    <property type="match status" value="1"/>
</dbReference>
<dbReference type="SMART" id="SM00670">
    <property type="entry name" value="PINc"/>
    <property type="match status" value="1"/>
</dbReference>
<dbReference type="SMART" id="SM00955">
    <property type="entry name" value="RNB"/>
    <property type="match status" value="1"/>
</dbReference>
<dbReference type="SUPFAM" id="SSF50249">
    <property type="entry name" value="Nucleic acid-binding proteins"/>
    <property type="match status" value="3"/>
</dbReference>
<dbReference type="SUPFAM" id="SSF88723">
    <property type="entry name" value="PIN domain-like"/>
    <property type="match status" value="1"/>
</dbReference>
<dbReference type="PROSITE" id="PS01175">
    <property type="entry name" value="RIBONUCLEASE_II"/>
    <property type="match status" value="1"/>
</dbReference>
<dbReference type="PROSITE" id="PS50126">
    <property type="entry name" value="S1"/>
    <property type="match status" value="1"/>
</dbReference>
<comment type="function">
    <text evidence="1 7">Catalytic component of the RNA exosome complex which has 3'-&gt;5' exoribonuclease activity and participates in a multitude of cellular RNA processing and degradation events. In the nucleus, the RNA exosome complex is involved in proper maturation of stable RNA species such as rRNA, snRNA and snoRNA, in the elimination of RNA processing by-products and non-coding 'pervasive' transcripts, such as antisense RNA species and cryptic unstable transcripts (CUTs), and of mRNAs with processing defects, thereby limiting or excluding their export to the cytoplasm. In the cytoplasm, the RNA exosome complex is involved in general mRNA turnover and in RNA surveillance pathways, preventing translation of aberrant mRNAs. The catalytic inactive RNA exosome core complex of 9 subunits (Exo-9) is proposed to play a pivotal role in the binding and presentation of RNA for ribonucleolysis, and to serve as a scaffold for the association with catalytic subunits and accessory proteins or complexes. DIS3 has both 3'-5' exonuclease and endonuclease activities. The exonuclease activity of DIS3 is down-regulated upon association with Exo-9 possibly involving a conformational change in the catalytic domain and threading of the RNA substrate through the complex central channel. Structured substrates can be degraded if they have a 3' single-stranded extension sufficiently long (such as 35 nt poly(A)) to span the proposed complex inner RNA-binding path and to reach the exonuclease site provided by dis3 (By similarity). Implicated in mitotic control. Essential for cell division and spore germination. May be involved in regulating protein dephosphorylation during mitosis.</text>
</comment>
<comment type="cofactor">
    <cofactor evidence="1">
        <name>Mg(2+)</name>
        <dbReference type="ChEBI" id="CHEBI:18420"/>
    </cofactor>
</comment>
<comment type="subunit">
    <text evidence="2 5 8">Component of the RNA exosome complex (By similarity). Specifically part of the catalytically inactive RNA exosome core complex (Exo-9) which may associate with the catalytic subunits rrp6 and dis3 in cytoplasmic- and nuclear-specific RNA exosome complex forms (By similarity). Exo-9 is formed by a hexameric base ring of RNase PH domain-containing subunits and a cap ring consisting of csl4, rrp4 and rrp40; dis3 associates with the base ring of Exo-9 (By similarity). Oligomer of dis3, pim1 and spi1 (PubMed:8896453). Interacts with ned1 (PubMed:12376568).</text>
</comment>
<comment type="subcellular location">
    <subcellularLocation>
        <location>Cytoplasm</location>
    </subcellularLocation>
    <subcellularLocation>
        <location evidence="6 7">Nucleus</location>
    </subcellularLocation>
    <text evidence="7">Abundant in the nucleus (PubMed:1944266).</text>
</comment>
<comment type="similarity">
    <text evidence="9">Belongs to the RNR ribonuclease family.</text>
</comment>
<feature type="chain" id="PRO_0000166421" description="Exosome complex exonuclease dis3">
    <location>
        <begin position="1"/>
        <end position="970"/>
    </location>
</feature>
<feature type="domain" description="PINc">
    <location>
        <begin position="83"/>
        <end position="198"/>
    </location>
</feature>
<feature type="domain" description="CSD1" evidence="3">
    <location>
        <begin position="251"/>
        <end position="334"/>
    </location>
</feature>
<feature type="domain" description="CSD2" evidence="3">
    <location>
        <begin position="394"/>
        <end position="461"/>
    </location>
</feature>
<feature type="domain" description="RNB" evidence="3">
    <location>
        <begin position="496"/>
        <end position="827"/>
    </location>
</feature>
<feature type="domain" description="S1 motif" evidence="4">
    <location>
        <begin position="869"/>
        <end position="969"/>
    </location>
</feature>
<feature type="region of interest" description="Not essential for function">
    <location>
        <begin position="1"/>
        <end position="74"/>
    </location>
</feature>
<feature type="region of interest" description="Essential for function">
    <location>
        <begin position="823"/>
        <end position="970"/>
    </location>
</feature>
<accession>P37202</accession>
<protein>
    <recommendedName>
        <fullName>Exosome complex exonuclease dis3</fullName>
        <ecNumber>3.1.13.-</ecNumber>
        <ecNumber>3.1.26.-</ecNumber>
    </recommendedName>
    <alternativeName>
        <fullName>Chromosome disjunction protein 3</fullName>
    </alternativeName>
    <alternativeName>
        <fullName>Mitotic control protein dis3</fullName>
    </alternativeName>
    <alternativeName>
        <fullName>Ribosomal RNA-processing protein 44</fullName>
    </alternativeName>
</protein>